<evidence type="ECO:0000255" key="1">
    <source>
        <dbReference type="HAMAP-Rule" id="MF_00191"/>
    </source>
</evidence>
<comment type="function">
    <text evidence="1">Catalyzes the conversion of 1-hydroxy-2-methyl-2-(E)-butenyl 4-diphosphate (HMBPP) into a mixture of isopentenyl diphosphate (IPP) and dimethylallyl diphosphate (DMAPP). Acts in the terminal step of the DOXP/MEP pathway for isoprenoid precursor biosynthesis.</text>
</comment>
<comment type="catalytic activity">
    <reaction evidence="1">
        <text>isopentenyl diphosphate + 2 oxidized [2Fe-2S]-[ferredoxin] + H2O = (2E)-4-hydroxy-3-methylbut-2-enyl diphosphate + 2 reduced [2Fe-2S]-[ferredoxin] + 2 H(+)</text>
        <dbReference type="Rhea" id="RHEA:24488"/>
        <dbReference type="Rhea" id="RHEA-COMP:10000"/>
        <dbReference type="Rhea" id="RHEA-COMP:10001"/>
        <dbReference type="ChEBI" id="CHEBI:15377"/>
        <dbReference type="ChEBI" id="CHEBI:15378"/>
        <dbReference type="ChEBI" id="CHEBI:33737"/>
        <dbReference type="ChEBI" id="CHEBI:33738"/>
        <dbReference type="ChEBI" id="CHEBI:128753"/>
        <dbReference type="ChEBI" id="CHEBI:128769"/>
        <dbReference type="EC" id="1.17.7.4"/>
    </reaction>
</comment>
<comment type="catalytic activity">
    <reaction evidence="1">
        <text>dimethylallyl diphosphate + 2 oxidized [2Fe-2S]-[ferredoxin] + H2O = (2E)-4-hydroxy-3-methylbut-2-enyl diphosphate + 2 reduced [2Fe-2S]-[ferredoxin] + 2 H(+)</text>
        <dbReference type="Rhea" id="RHEA:24825"/>
        <dbReference type="Rhea" id="RHEA-COMP:10000"/>
        <dbReference type="Rhea" id="RHEA-COMP:10001"/>
        <dbReference type="ChEBI" id="CHEBI:15377"/>
        <dbReference type="ChEBI" id="CHEBI:15378"/>
        <dbReference type="ChEBI" id="CHEBI:33737"/>
        <dbReference type="ChEBI" id="CHEBI:33738"/>
        <dbReference type="ChEBI" id="CHEBI:57623"/>
        <dbReference type="ChEBI" id="CHEBI:128753"/>
        <dbReference type="EC" id="1.17.7.4"/>
    </reaction>
</comment>
<comment type="cofactor">
    <cofactor evidence="1">
        <name>[4Fe-4S] cluster</name>
        <dbReference type="ChEBI" id="CHEBI:49883"/>
    </cofactor>
    <text evidence="1">Binds 1 [4Fe-4S] cluster per subunit.</text>
</comment>
<comment type="pathway">
    <text evidence="1">Isoprenoid biosynthesis; dimethylallyl diphosphate biosynthesis; dimethylallyl diphosphate from (2E)-4-hydroxy-3-methylbutenyl diphosphate: step 1/1.</text>
</comment>
<comment type="pathway">
    <text evidence="1">Isoprenoid biosynthesis; isopentenyl diphosphate biosynthesis via DXP pathway; isopentenyl diphosphate from 1-deoxy-D-xylulose 5-phosphate: step 6/6.</text>
</comment>
<comment type="similarity">
    <text evidence="1">Belongs to the IspH family.</text>
</comment>
<keyword id="KW-0004">4Fe-4S</keyword>
<keyword id="KW-0408">Iron</keyword>
<keyword id="KW-0411">Iron-sulfur</keyword>
<keyword id="KW-0414">Isoprene biosynthesis</keyword>
<keyword id="KW-0479">Metal-binding</keyword>
<keyword id="KW-0560">Oxidoreductase</keyword>
<proteinExistence type="inferred from homology"/>
<dbReference type="EC" id="1.17.7.4" evidence="1"/>
<dbReference type="EMBL" id="CP000805">
    <property type="protein sequence ID" value="ACD70968.1"/>
    <property type="molecule type" value="Genomic_DNA"/>
</dbReference>
<dbReference type="RefSeq" id="WP_010881994.1">
    <property type="nucleotide sequence ID" value="NC_021508.1"/>
</dbReference>
<dbReference type="SMR" id="B2S3D9"/>
<dbReference type="GeneID" id="93876316"/>
<dbReference type="KEGG" id="tpp:TPASS_0547"/>
<dbReference type="PATRIC" id="fig|455434.6.peg.545"/>
<dbReference type="UniPathway" id="UPA00056">
    <property type="reaction ID" value="UER00097"/>
</dbReference>
<dbReference type="UniPathway" id="UPA00059">
    <property type="reaction ID" value="UER00105"/>
</dbReference>
<dbReference type="Proteomes" id="UP000001202">
    <property type="component" value="Chromosome"/>
</dbReference>
<dbReference type="GO" id="GO:0051539">
    <property type="term" value="F:4 iron, 4 sulfur cluster binding"/>
    <property type="evidence" value="ECO:0007669"/>
    <property type="project" value="UniProtKB-UniRule"/>
</dbReference>
<dbReference type="GO" id="GO:0051745">
    <property type="term" value="F:4-hydroxy-3-methylbut-2-enyl diphosphate reductase activity"/>
    <property type="evidence" value="ECO:0007669"/>
    <property type="project" value="UniProtKB-UniRule"/>
</dbReference>
<dbReference type="GO" id="GO:0046872">
    <property type="term" value="F:metal ion binding"/>
    <property type="evidence" value="ECO:0007669"/>
    <property type="project" value="UniProtKB-KW"/>
</dbReference>
<dbReference type="GO" id="GO:0050992">
    <property type="term" value="P:dimethylallyl diphosphate biosynthetic process"/>
    <property type="evidence" value="ECO:0007669"/>
    <property type="project" value="UniProtKB-UniRule"/>
</dbReference>
<dbReference type="GO" id="GO:0019288">
    <property type="term" value="P:isopentenyl diphosphate biosynthetic process, methylerythritol 4-phosphate pathway"/>
    <property type="evidence" value="ECO:0007669"/>
    <property type="project" value="UniProtKB-UniRule"/>
</dbReference>
<dbReference type="GO" id="GO:0016114">
    <property type="term" value="P:terpenoid biosynthetic process"/>
    <property type="evidence" value="ECO:0007669"/>
    <property type="project" value="UniProtKB-UniRule"/>
</dbReference>
<dbReference type="CDD" id="cd13944">
    <property type="entry name" value="lytB_ispH"/>
    <property type="match status" value="1"/>
</dbReference>
<dbReference type="Gene3D" id="3.40.50.11270">
    <property type="match status" value="1"/>
</dbReference>
<dbReference type="Gene3D" id="3.40.1010.20">
    <property type="entry name" value="4-hydroxy-3-methylbut-2-enyl diphosphate reductase, catalytic domain"/>
    <property type="match status" value="2"/>
</dbReference>
<dbReference type="HAMAP" id="MF_00191">
    <property type="entry name" value="IspH"/>
    <property type="match status" value="1"/>
</dbReference>
<dbReference type="InterPro" id="IPR003451">
    <property type="entry name" value="LytB/IspH"/>
</dbReference>
<dbReference type="NCBIfam" id="TIGR00216">
    <property type="entry name" value="ispH_lytB"/>
    <property type="match status" value="1"/>
</dbReference>
<dbReference type="PANTHER" id="PTHR30426">
    <property type="entry name" value="4-HYDROXY-3-METHYLBUT-2-ENYL DIPHOSPHATE REDUCTASE"/>
    <property type="match status" value="1"/>
</dbReference>
<dbReference type="PANTHER" id="PTHR30426:SF0">
    <property type="entry name" value="4-HYDROXY-3-METHYLBUT-2-ENYL DIPHOSPHATE REDUCTASE"/>
    <property type="match status" value="1"/>
</dbReference>
<dbReference type="Pfam" id="PF02401">
    <property type="entry name" value="LYTB"/>
    <property type="match status" value="1"/>
</dbReference>
<accession>B2S3D9</accession>
<gene>
    <name evidence="1" type="primary">ispH</name>
    <name type="ordered locus">TPASS_0547</name>
</gene>
<sequence>MRKVNCIKVITRAHTLGYCGGVRMAVRMAEHARAHHRGSVYTLGPLVHNPVTLARLRARGIECLDPAHLSFALHAPAAPGAAPHAVEEKTARTVVIRAHGVAPEVYEALERSGAQVVDATCPRVKESQRRAQGFAAQGLHVILAGDRNHGEIVGIEGYVRAGAAQACSHLPGGAPDGMLPQVQCFVVQNAREAAALPCLARAALLAQTTITQGEYDAIAAAARTRVRELTVARTICAATARRQAALRALAPTVEALLVIGGAHSANTQRLLHTARETSLPTWLVERVEDIPPDIYAFSAVGISAGASTPDCVIAAVEQALRTGGAPVASRVSSSALPKVSTCRAVCAAATSSVGSAGASGAVSPGAVRPFAVGSVR</sequence>
<organism>
    <name type="scientific">Treponema pallidum subsp. pallidum (strain SS14)</name>
    <dbReference type="NCBI Taxonomy" id="455434"/>
    <lineage>
        <taxon>Bacteria</taxon>
        <taxon>Pseudomonadati</taxon>
        <taxon>Spirochaetota</taxon>
        <taxon>Spirochaetia</taxon>
        <taxon>Spirochaetales</taxon>
        <taxon>Treponemataceae</taxon>
        <taxon>Treponema</taxon>
    </lineage>
</organism>
<reference key="1">
    <citation type="journal article" date="2008" name="BMC Microbiol.">
        <title>Complete genome sequence of Treponema pallidum ssp. pallidum strain SS14 determined with oligonucleotide arrays.</title>
        <authorList>
            <person name="Matejkova P."/>
            <person name="Strouhal M."/>
            <person name="Smajs D."/>
            <person name="Norris S.J."/>
            <person name="Palzkill T."/>
            <person name="Petrosino J.F."/>
            <person name="Sodergren E."/>
            <person name="Norton J.E."/>
            <person name="Singh J."/>
            <person name="Richmond T.A."/>
            <person name="Molla M.N."/>
            <person name="Albert T.J."/>
            <person name="Weinstock G.M."/>
        </authorList>
    </citation>
    <scope>NUCLEOTIDE SEQUENCE [LARGE SCALE GENOMIC DNA]</scope>
    <source>
        <strain>SS14</strain>
    </source>
</reference>
<protein>
    <recommendedName>
        <fullName evidence="1">4-hydroxy-3-methylbut-2-enyl diphosphate reductase</fullName>
        <shortName evidence="1">HMBPP reductase</shortName>
        <ecNumber evidence="1">1.17.7.4</ecNumber>
    </recommendedName>
</protein>
<name>ISPH_TREPS</name>
<feature type="chain" id="PRO_1000098985" description="4-hydroxy-3-methylbut-2-enyl diphosphate reductase">
    <location>
        <begin position="1"/>
        <end position="376"/>
    </location>
</feature>
<feature type="active site" description="Proton donor" evidence="1">
    <location>
        <position position="151"/>
    </location>
</feature>
<feature type="binding site" evidence="1">
    <location>
        <position position="19"/>
    </location>
    <ligand>
        <name>[4Fe-4S] cluster</name>
        <dbReference type="ChEBI" id="CHEBI:49883"/>
    </ligand>
</feature>
<feature type="binding site" evidence="1">
    <location>
        <position position="48"/>
    </location>
    <ligand>
        <name>(2E)-4-hydroxy-3-methylbut-2-enyl diphosphate</name>
        <dbReference type="ChEBI" id="CHEBI:128753"/>
    </ligand>
</feature>
<feature type="binding site" evidence="1">
    <location>
        <position position="48"/>
    </location>
    <ligand>
        <name>dimethylallyl diphosphate</name>
        <dbReference type="ChEBI" id="CHEBI:57623"/>
    </ligand>
</feature>
<feature type="binding site" evidence="1">
    <location>
        <position position="48"/>
    </location>
    <ligand>
        <name>isopentenyl diphosphate</name>
        <dbReference type="ChEBI" id="CHEBI:128769"/>
    </ligand>
</feature>
<feature type="binding site" evidence="1">
    <location>
        <position position="99"/>
    </location>
    <ligand>
        <name>(2E)-4-hydroxy-3-methylbut-2-enyl diphosphate</name>
        <dbReference type="ChEBI" id="CHEBI:128753"/>
    </ligand>
</feature>
<feature type="binding site" evidence="1">
    <location>
        <position position="99"/>
    </location>
    <ligand>
        <name>dimethylallyl diphosphate</name>
        <dbReference type="ChEBI" id="CHEBI:57623"/>
    </ligand>
</feature>
<feature type="binding site" evidence="1">
    <location>
        <position position="99"/>
    </location>
    <ligand>
        <name>isopentenyl diphosphate</name>
        <dbReference type="ChEBI" id="CHEBI:128769"/>
    </ligand>
</feature>
<feature type="binding site" evidence="1">
    <location>
        <position position="121"/>
    </location>
    <ligand>
        <name>[4Fe-4S] cluster</name>
        <dbReference type="ChEBI" id="CHEBI:49883"/>
    </ligand>
</feature>
<feature type="binding site" evidence="1">
    <location>
        <position position="149"/>
    </location>
    <ligand>
        <name>(2E)-4-hydroxy-3-methylbut-2-enyl diphosphate</name>
        <dbReference type="ChEBI" id="CHEBI:128753"/>
    </ligand>
</feature>
<feature type="binding site" evidence="1">
    <location>
        <position position="149"/>
    </location>
    <ligand>
        <name>dimethylallyl diphosphate</name>
        <dbReference type="ChEBI" id="CHEBI:57623"/>
    </ligand>
</feature>
<feature type="binding site" evidence="1">
    <location>
        <position position="149"/>
    </location>
    <ligand>
        <name>isopentenyl diphosphate</name>
        <dbReference type="ChEBI" id="CHEBI:128769"/>
    </ligand>
</feature>
<feature type="binding site" evidence="1">
    <location>
        <position position="208"/>
    </location>
    <ligand>
        <name>(2E)-4-hydroxy-3-methylbut-2-enyl diphosphate</name>
        <dbReference type="ChEBI" id="CHEBI:128753"/>
    </ligand>
</feature>
<feature type="binding site" evidence="1">
    <location>
        <position position="236"/>
    </location>
    <ligand>
        <name>[4Fe-4S] cluster</name>
        <dbReference type="ChEBI" id="CHEBI:49883"/>
    </ligand>
</feature>
<feature type="binding site" evidence="1">
    <location>
        <position position="264"/>
    </location>
    <ligand>
        <name>(2E)-4-hydroxy-3-methylbut-2-enyl diphosphate</name>
        <dbReference type="ChEBI" id="CHEBI:128753"/>
    </ligand>
</feature>
<feature type="binding site" evidence="1">
    <location>
        <position position="264"/>
    </location>
    <ligand>
        <name>dimethylallyl diphosphate</name>
        <dbReference type="ChEBI" id="CHEBI:57623"/>
    </ligand>
</feature>
<feature type="binding site" evidence="1">
    <location>
        <position position="264"/>
    </location>
    <ligand>
        <name>isopentenyl diphosphate</name>
        <dbReference type="ChEBI" id="CHEBI:128769"/>
    </ligand>
</feature>
<feature type="binding site" evidence="1">
    <location>
        <position position="266"/>
    </location>
    <ligand>
        <name>(2E)-4-hydroxy-3-methylbut-2-enyl diphosphate</name>
        <dbReference type="ChEBI" id="CHEBI:128753"/>
    </ligand>
</feature>
<feature type="binding site" evidence="1">
    <location>
        <position position="266"/>
    </location>
    <ligand>
        <name>dimethylallyl diphosphate</name>
        <dbReference type="ChEBI" id="CHEBI:57623"/>
    </ligand>
</feature>
<feature type="binding site" evidence="1">
    <location>
        <position position="266"/>
    </location>
    <ligand>
        <name>isopentenyl diphosphate</name>
        <dbReference type="ChEBI" id="CHEBI:128769"/>
    </ligand>
</feature>
<feature type="binding site" evidence="1">
    <location>
        <position position="307"/>
    </location>
    <ligand>
        <name>(2E)-4-hydroxy-3-methylbut-2-enyl diphosphate</name>
        <dbReference type="ChEBI" id="CHEBI:128753"/>
    </ligand>
</feature>
<feature type="binding site" evidence="1">
    <location>
        <position position="307"/>
    </location>
    <ligand>
        <name>dimethylallyl diphosphate</name>
        <dbReference type="ChEBI" id="CHEBI:57623"/>
    </ligand>
</feature>
<feature type="binding site" evidence="1">
    <location>
        <position position="307"/>
    </location>
    <ligand>
        <name>isopentenyl diphosphate</name>
        <dbReference type="ChEBI" id="CHEBI:128769"/>
    </ligand>
</feature>